<gene>
    <name evidence="1" type="primary">trpB</name>
    <name type="ordered locus">TTHA1095</name>
</gene>
<proteinExistence type="inferred from homology"/>
<name>TRPB_THET8</name>
<accession>Q5SJB9</accession>
<protein>
    <recommendedName>
        <fullName evidence="1">Tryptophan synthase beta chain</fullName>
        <ecNumber evidence="1">4.2.1.20</ecNumber>
    </recommendedName>
</protein>
<reference key="1">
    <citation type="submission" date="2004-11" db="EMBL/GenBank/DDBJ databases">
        <title>Complete genome sequence of Thermus thermophilus HB8.</title>
        <authorList>
            <person name="Masui R."/>
            <person name="Kurokawa K."/>
            <person name="Nakagawa N."/>
            <person name="Tokunaga F."/>
            <person name="Koyama Y."/>
            <person name="Shibata T."/>
            <person name="Oshima T."/>
            <person name="Yokoyama S."/>
            <person name="Yasunaga T."/>
            <person name="Kuramitsu S."/>
        </authorList>
    </citation>
    <scope>NUCLEOTIDE SEQUENCE [LARGE SCALE GENOMIC DNA]</scope>
    <source>
        <strain>ATCC 27634 / DSM 579 / HB8</strain>
    </source>
</reference>
<organism>
    <name type="scientific">Thermus thermophilus (strain ATCC 27634 / DSM 579 / HB8)</name>
    <dbReference type="NCBI Taxonomy" id="300852"/>
    <lineage>
        <taxon>Bacteria</taxon>
        <taxon>Thermotogati</taxon>
        <taxon>Deinococcota</taxon>
        <taxon>Deinococci</taxon>
        <taxon>Thermales</taxon>
        <taxon>Thermaceae</taxon>
        <taxon>Thermus</taxon>
    </lineage>
</organism>
<evidence type="ECO:0000255" key="1">
    <source>
        <dbReference type="HAMAP-Rule" id="MF_00133"/>
    </source>
</evidence>
<dbReference type="EC" id="4.2.1.20" evidence="1"/>
<dbReference type="EMBL" id="AP008226">
    <property type="protein sequence ID" value="BAD70918.1"/>
    <property type="molecule type" value="Genomic_DNA"/>
</dbReference>
<dbReference type="RefSeq" id="WP_011173169.1">
    <property type="nucleotide sequence ID" value="NC_006461.1"/>
</dbReference>
<dbReference type="RefSeq" id="YP_144361.1">
    <property type="nucleotide sequence ID" value="NC_006461.1"/>
</dbReference>
<dbReference type="SMR" id="Q5SJB9"/>
<dbReference type="EnsemblBacteria" id="BAD70918">
    <property type="protein sequence ID" value="BAD70918"/>
    <property type="gene ID" value="BAD70918"/>
</dbReference>
<dbReference type="GeneID" id="3168938"/>
<dbReference type="KEGG" id="ttj:TTHA1095"/>
<dbReference type="PATRIC" id="fig|300852.9.peg.1075"/>
<dbReference type="eggNOG" id="COG0133">
    <property type="taxonomic scope" value="Bacteria"/>
</dbReference>
<dbReference type="HOGENOM" id="CLU_016734_3_1_0"/>
<dbReference type="PhylomeDB" id="Q5SJB9"/>
<dbReference type="UniPathway" id="UPA00035">
    <property type="reaction ID" value="UER00044"/>
</dbReference>
<dbReference type="Proteomes" id="UP000000532">
    <property type="component" value="Chromosome"/>
</dbReference>
<dbReference type="GO" id="GO:0005737">
    <property type="term" value="C:cytoplasm"/>
    <property type="evidence" value="ECO:0007669"/>
    <property type="project" value="TreeGrafter"/>
</dbReference>
<dbReference type="GO" id="GO:0004834">
    <property type="term" value="F:tryptophan synthase activity"/>
    <property type="evidence" value="ECO:0007669"/>
    <property type="project" value="UniProtKB-UniRule"/>
</dbReference>
<dbReference type="CDD" id="cd06446">
    <property type="entry name" value="Trp-synth_B"/>
    <property type="match status" value="1"/>
</dbReference>
<dbReference type="FunFam" id="3.40.50.1100:FF:000001">
    <property type="entry name" value="Tryptophan synthase beta chain"/>
    <property type="match status" value="1"/>
</dbReference>
<dbReference type="FunFam" id="3.40.50.1100:FF:000004">
    <property type="entry name" value="Tryptophan synthase beta chain"/>
    <property type="match status" value="1"/>
</dbReference>
<dbReference type="Gene3D" id="3.40.50.1100">
    <property type="match status" value="2"/>
</dbReference>
<dbReference type="HAMAP" id="MF_00133">
    <property type="entry name" value="Trp_synth_beta"/>
    <property type="match status" value="1"/>
</dbReference>
<dbReference type="InterPro" id="IPR006653">
    <property type="entry name" value="Trp_synth_b_CS"/>
</dbReference>
<dbReference type="InterPro" id="IPR006654">
    <property type="entry name" value="Trp_synth_beta"/>
</dbReference>
<dbReference type="InterPro" id="IPR023026">
    <property type="entry name" value="Trp_synth_beta/beta-like"/>
</dbReference>
<dbReference type="InterPro" id="IPR001926">
    <property type="entry name" value="TrpB-like_PALP"/>
</dbReference>
<dbReference type="InterPro" id="IPR036052">
    <property type="entry name" value="TrpB-like_PALP_sf"/>
</dbReference>
<dbReference type="NCBIfam" id="TIGR00263">
    <property type="entry name" value="trpB"/>
    <property type="match status" value="1"/>
</dbReference>
<dbReference type="PANTHER" id="PTHR48077:SF3">
    <property type="entry name" value="TRYPTOPHAN SYNTHASE"/>
    <property type="match status" value="1"/>
</dbReference>
<dbReference type="PANTHER" id="PTHR48077">
    <property type="entry name" value="TRYPTOPHAN SYNTHASE-RELATED"/>
    <property type="match status" value="1"/>
</dbReference>
<dbReference type="Pfam" id="PF00291">
    <property type="entry name" value="PALP"/>
    <property type="match status" value="1"/>
</dbReference>
<dbReference type="PIRSF" id="PIRSF001413">
    <property type="entry name" value="Trp_syn_beta"/>
    <property type="match status" value="1"/>
</dbReference>
<dbReference type="SUPFAM" id="SSF53686">
    <property type="entry name" value="Tryptophan synthase beta subunit-like PLP-dependent enzymes"/>
    <property type="match status" value="1"/>
</dbReference>
<dbReference type="PROSITE" id="PS00168">
    <property type="entry name" value="TRP_SYNTHASE_BETA"/>
    <property type="match status" value="1"/>
</dbReference>
<keyword id="KW-0028">Amino-acid biosynthesis</keyword>
<keyword id="KW-0057">Aromatic amino acid biosynthesis</keyword>
<keyword id="KW-0456">Lyase</keyword>
<keyword id="KW-0663">Pyridoxal phosphate</keyword>
<keyword id="KW-1185">Reference proteome</keyword>
<keyword id="KW-0822">Tryptophan biosynthesis</keyword>
<comment type="function">
    <text evidence="1">The beta subunit is responsible for the synthesis of L-tryptophan from indole and L-serine.</text>
</comment>
<comment type="catalytic activity">
    <reaction evidence="1">
        <text>(1S,2R)-1-C-(indol-3-yl)glycerol 3-phosphate + L-serine = D-glyceraldehyde 3-phosphate + L-tryptophan + H2O</text>
        <dbReference type="Rhea" id="RHEA:10532"/>
        <dbReference type="ChEBI" id="CHEBI:15377"/>
        <dbReference type="ChEBI" id="CHEBI:33384"/>
        <dbReference type="ChEBI" id="CHEBI:57912"/>
        <dbReference type="ChEBI" id="CHEBI:58866"/>
        <dbReference type="ChEBI" id="CHEBI:59776"/>
        <dbReference type="EC" id="4.2.1.20"/>
    </reaction>
</comment>
<comment type="cofactor">
    <cofactor evidence="1">
        <name>pyridoxal 5'-phosphate</name>
        <dbReference type="ChEBI" id="CHEBI:597326"/>
    </cofactor>
</comment>
<comment type="pathway">
    <text evidence="1">Amino-acid biosynthesis; L-tryptophan biosynthesis; L-tryptophan from chorismate: step 5/5.</text>
</comment>
<comment type="subunit">
    <text evidence="1">Tetramer of two alpha and two beta chains.</text>
</comment>
<comment type="similarity">
    <text evidence="1">Belongs to the TrpB family.</text>
</comment>
<sequence>MGVVLARGAFRERSMLTLPDFPLPDARGRFGPYGGRYVPETLIPALEELEAAYREAKKDPAFLEELDHYLRQFAGRPTPLYHAKRLSEYWGGAQVFLKREDLLHTGAHKINNTLGQALLARRMGKRRVIAETGAGQHGVSVATVAALFGLECVVYMGEEDVRRQALNVFRMKLLGAEVRPVAAGSRTLKDATNEAIRDWITNVRTTFYILGSVVGPHPYPMMVRDFQSVIGEEVKRQSLELFGRLPDALIAAVGGGSNAIGLFAPFAYLPEGRPKLIGVEAAGEGLSTGRHAASIGAGKRGVLHGSYMYLLYDHDGQITPAHSVSAGLDYPGVGPEHSYYADAGVAEYASVTDEEALEGFKLLARLEGIIPALESAHAIAYAAKVVPEMDKDQVVVINLSGRGDKDVTEVMRLLGGEL</sequence>
<feature type="chain" id="PRO_1000018417" description="Tryptophan synthase beta chain">
    <location>
        <begin position="1"/>
        <end position="418"/>
    </location>
</feature>
<feature type="modified residue" description="N6-(pyridoxal phosphate)lysine" evidence="1">
    <location>
        <position position="109"/>
    </location>
</feature>